<keyword id="KW-0119">Carbohydrate metabolism</keyword>
<keyword id="KW-0963">Cytoplasm</keyword>
<keyword id="KW-0326">Glycosidase</keyword>
<keyword id="KW-0378">Hydrolase</keyword>
<keyword id="KW-0442">Lipid degradation</keyword>
<keyword id="KW-0443">Lipid metabolism</keyword>
<keyword id="KW-1185">Reference proteome</keyword>
<keyword id="KW-0677">Repeat</keyword>
<name>NEUR2_RAT</name>
<organism>
    <name type="scientific">Rattus norvegicus</name>
    <name type="common">Rat</name>
    <dbReference type="NCBI Taxonomy" id="10116"/>
    <lineage>
        <taxon>Eukaryota</taxon>
        <taxon>Metazoa</taxon>
        <taxon>Chordata</taxon>
        <taxon>Craniata</taxon>
        <taxon>Vertebrata</taxon>
        <taxon>Euteleostomi</taxon>
        <taxon>Mammalia</taxon>
        <taxon>Eutheria</taxon>
        <taxon>Euarchontoglires</taxon>
        <taxon>Glires</taxon>
        <taxon>Rodentia</taxon>
        <taxon>Myomorpha</taxon>
        <taxon>Muroidea</taxon>
        <taxon>Muridae</taxon>
        <taxon>Murinae</taxon>
        <taxon>Rattus</taxon>
    </lineage>
</organism>
<protein>
    <recommendedName>
        <fullName>Sialidase-2</fullName>
        <ecNumber evidence="5">3.2.1.18</ecNumber>
    </recommendedName>
    <alternativeName>
        <fullName>Cytosolic sialidase</fullName>
    </alternativeName>
    <alternativeName>
        <fullName>N-acetyl-alpha-neuraminidase 2</fullName>
    </alternativeName>
</protein>
<proteinExistence type="evidence at protein level"/>
<gene>
    <name type="primary">Neu2</name>
</gene>
<sequence>METCPVLQKETLFHTEVYAYRIPALLYLKKQKTLLAFAEKRASRTDEHAELIVLRRGSYNGATNHVKWQPEEVVTQAQLEGHRSMNPCPLYDKQTKTLFLFFIAVPGRVSEQHQLQTRVNVTRLCRVTSTDYGMNWSPVQDLTETTIGSTHQDWATFAVGPGHCLQLRNRAGSLLVPAYAYRKLHPVHKPTPFAFCFISLDHGHTWELGNFVSENSLECQVAEVGTGAHRVVYLNARSFIGARVQAQSPNDGLDFQDNQVVSKLVEPPHGCHGSVVAFHSPTSKPDCLRHVAAYTHPTDSRNRTNLGVYLNQTPLDPTAWSEPTLLATGTCAYSDLQIWGLGPDGSPQFGCLYESGNYDEIIFLMFTLKQAFPTVHGAQ</sequence>
<evidence type="ECO:0000250" key="1"/>
<evidence type="ECO:0000250" key="2">
    <source>
        <dbReference type="UniProtKB" id="Q9JMH3"/>
    </source>
</evidence>
<evidence type="ECO:0000250" key="3">
    <source>
        <dbReference type="UniProtKB" id="Q9Y3R4"/>
    </source>
</evidence>
<evidence type="ECO:0000255" key="4"/>
<evidence type="ECO:0000269" key="5">
    <source>
    </source>
</evidence>
<evidence type="ECO:0000305" key="6"/>
<comment type="function">
    <text evidence="3">Exo-alpha-sialidase that catalyzes the hydrolytic cleavage of the terminal sialic acid (N-acetylneuraminic acid, Neu5Ac) of a glycan moiety in the catabolism of glycolipids, glycoproteins and oligosacharides. Recognizes sialyl linkage positions of the glycan moiety as well as the supramolecular organization of the sialoglycoconjugate. Displays preference for alpha-(2-&gt;3)-sialylated GD1a and GT1B gangliosides over alpha-(2-&gt;8)-sialylated GD1b, in both monomeric forms and micelles. Hydrolyzes monomeric GM1 ganglioside, but has no activity toward the miscellar form. Has lower sialidase activity for glycoproteins such as fetuin and TF/transferrin that carry a mixture of alpha-(2-&gt;3) and alpha-(2-&gt;6)-sialyl linkages. Cleaves milk oligosaccharide alpha-(2-&gt;3)-sialyllactose, but is inactive toward alpha-(2-&gt;6)-sialyllactose isomer. Has no activity toward colominic acid, a homomer of alpha-(2-&gt;8)-linked Neu5Ac residues.</text>
</comment>
<comment type="catalytic activity">
    <reaction evidence="5">
        <text>Hydrolysis of alpha-(2-&gt;3)-, alpha-(2-&gt;6)-, alpha-(2-&gt;8)- glycosidic linkages of terminal sialic acid residues in oligosaccharides, glycoproteins, glycolipids, colominic acid and synthetic substrates.</text>
        <dbReference type="EC" id="3.2.1.18"/>
    </reaction>
</comment>
<comment type="catalytic activity">
    <reaction evidence="3">
        <text>a ganglioside GD1a + H2O = a ganglioside GM1 + N-acetylneuraminate</text>
        <dbReference type="Rhea" id="RHEA:47832"/>
        <dbReference type="ChEBI" id="CHEBI:15377"/>
        <dbReference type="ChEBI" id="CHEBI:35418"/>
        <dbReference type="ChEBI" id="CHEBI:82637"/>
        <dbReference type="ChEBI" id="CHEBI:82639"/>
    </reaction>
    <physiologicalReaction direction="left-to-right" evidence="3">
        <dbReference type="Rhea" id="RHEA:47833"/>
    </physiologicalReaction>
</comment>
<comment type="catalytic activity">
    <reaction evidence="3">
        <text>a ganglioside GM1 + H2O = a ganglioside GA1 + N-acetylneuraminate</text>
        <dbReference type="Rhea" id="RHEA:47872"/>
        <dbReference type="ChEBI" id="CHEBI:15377"/>
        <dbReference type="ChEBI" id="CHEBI:35418"/>
        <dbReference type="ChEBI" id="CHEBI:82639"/>
        <dbReference type="ChEBI" id="CHEBI:88069"/>
    </reaction>
    <physiologicalReaction direction="left-to-right" evidence="3">
        <dbReference type="Rhea" id="RHEA:47873"/>
    </physiologicalReaction>
</comment>
<comment type="catalytic activity">
    <reaction evidence="3">
        <text>a ganglioside GT1b + H2O = a ganglioside GD1b + N-acetylneuraminate</text>
        <dbReference type="Rhea" id="RHEA:47828"/>
        <dbReference type="ChEBI" id="CHEBI:15377"/>
        <dbReference type="ChEBI" id="CHEBI:35418"/>
        <dbReference type="ChEBI" id="CHEBI:82939"/>
        <dbReference type="ChEBI" id="CHEBI:82940"/>
    </reaction>
    <physiologicalReaction direction="left-to-right" evidence="3">
        <dbReference type="Rhea" id="RHEA:47829"/>
    </physiologicalReaction>
</comment>
<comment type="catalytic activity">
    <reaction evidence="3">
        <text>a ganglioside GD1b + H2O = a ganglioside GM1 + N-acetylneuraminate</text>
        <dbReference type="Rhea" id="RHEA:47876"/>
        <dbReference type="ChEBI" id="CHEBI:15377"/>
        <dbReference type="ChEBI" id="CHEBI:35418"/>
        <dbReference type="ChEBI" id="CHEBI:82639"/>
        <dbReference type="ChEBI" id="CHEBI:82939"/>
    </reaction>
    <physiologicalReaction direction="left-to-right" evidence="3">
        <dbReference type="Rhea" id="RHEA:47877"/>
    </physiologicalReaction>
</comment>
<comment type="catalytic activity">
    <reaction evidence="2">
        <text>a ganglioside GD3 + H2O = a ganglioside GM3 + N-acetylneuraminate</text>
        <dbReference type="Rhea" id="RHEA:48120"/>
        <dbReference type="ChEBI" id="CHEBI:15377"/>
        <dbReference type="ChEBI" id="CHEBI:35418"/>
        <dbReference type="ChEBI" id="CHEBI:79210"/>
        <dbReference type="ChEBI" id="CHEBI:79214"/>
    </reaction>
    <physiologicalReaction direction="left-to-right" evidence="2">
        <dbReference type="Rhea" id="RHEA:48121"/>
    </physiologicalReaction>
</comment>
<comment type="catalytic activity">
    <reaction evidence="3">
        <text>a ganglioside GM3 + H2O = a beta-D-galactosyl-(1-&gt;4)-beta-D-glucosyl-(1&lt;-&gt;1)-ceramide + N-acetylneuraminate</text>
        <dbReference type="Rhea" id="RHEA:48136"/>
        <dbReference type="ChEBI" id="CHEBI:15377"/>
        <dbReference type="ChEBI" id="CHEBI:35418"/>
        <dbReference type="ChEBI" id="CHEBI:79208"/>
        <dbReference type="ChEBI" id="CHEBI:79210"/>
    </reaction>
    <physiologicalReaction direction="left-to-right" evidence="3">
        <dbReference type="Rhea" id="RHEA:48137"/>
    </physiologicalReaction>
</comment>
<comment type="catalytic activity">
    <reaction evidence="2">
        <text>a ganglioside GM2 + H2O = a ganglioside GA2 + N-acetylneuraminate</text>
        <dbReference type="Rhea" id="RHEA:48172"/>
        <dbReference type="ChEBI" id="CHEBI:15377"/>
        <dbReference type="ChEBI" id="CHEBI:35418"/>
        <dbReference type="ChEBI" id="CHEBI:79218"/>
        <dbReference type="ChEBI" id="CHEBI:90085"/>
    </reaction>
    <physiologicalReaction direction="left-to-right" evidence="2">
        <dbReference type="Rhea" id="RHEA:48173"/>
    </physiologicalReaction>
</comment>
<comment type="catalytic activity">
    <reaction evidence="3">
        <text>a neolactoside IV(3)-alpha-NeuAc-nLc4Cer(d18:1(4E)) + H2O = a neolactoside nLc4Cer(d18:1(4E)) + N-acetylneuraminate</text>
        <dbReference type="Rhea" id="RHEA:47852"/>
        <dbReference type="ChEBI" id="CHEBI:15377"/>
        <dbReference type="ChEBI" id="CHEBI:17006"/>
        <dbReference type="ChEBI" id="CHEBI:35418"/>
        <dbReference type="ChEBI" id="CHEBI:58665"/>
    </reaction>
    <physiologicalReaction direction="left-to-right" evidence="3">
        <dbReference type="Rhea" id="RHEA:47853"/>
    </physiologicalReaction>
</comment>
<comment type="catalytic activity">
    <reaction evidence="3">
        <text>N-acetyl-alpha-neuraminosyl-(2-&gt;3)-beta-D-galactosyl-(1-&gt;4)-D-glucose + H2O = lactose + N-acetylneuraminate</text>
        <dbReference type="Rhea" id="RHEA:64640"/>
        <dbReference type="ChEBI" id="CHEBI:15377"/>
        <dbReference type="ChEBI" id="CHEBI:17716"/>
        <dbReference type="ChEBI" id="CHEBI:35418"/>
        <dbReference type="ChEBI" id="CHEBI:156068"/>
    </reaction>
    <physiologicalReaction direction="left-to-right" evidence="3">
        <dbReference type="Rhea" id="RHEA:64641"/>
    </physiologicalReaction>
</comment>
<comment type="subcellular location">
    <subcellularLocation>
        <location evidence="3">Cytoplasm</location>
        <location evidence="3">Cytosol</location>
    </subcellularLocation>
</comment>
<comment type="tissue specificity">
    <text evidence="5">Detected in skeletal muscle.</text>
</comment>
<comment type="similarity">
    <text evidence="6">Belongs to the glycosyl hydrolase 33 family.</text>
</comment>
<reference key="1">
    <citation type="journal article" date="1993" name="J. Biol. Chem.">
        <title>Molecular cloning and expression of cDNA encoding rat skeletal muscle cytosolic sialidase.</title>
        <authorList>
            <person name="Miyagi T."/>
            <person name="Konno K."/>
            <person name="Emori Y."/>
            <person name="Kawasaki H."/>
            <person name="Suzuki K."/>
            <person name="Yasui A."/>
            <person name="Tsuiki S."/>
        </authorList>
    </citation>
    <scope>NUCLEOTIDE SEQUENCE [MRNA]</scope>
    <scope>CATALYTIC ACTIVITY</scope>
    <scope>TISSUE SPECIFICITY</scope>
    <source>
        <strain>Wistar</strain>
        <tissue>Skeletal muscle</tissue>
    </source>
</reference>
<reference key="2">
    <citation type="journal article" date="1995" name="Glycobiology">
        <title>Genomic organization and the 5'-upstream sequence of the rat cytosolic sialidase gene.</title>
        <authorList>
            <person name="Sato K."/>
            <person name="Miyagi T."/>
        </authorList>
    </citation>
    <scope>NUCLEOTIDE SEQUENCE [GENOMIC DNA] OF 1-67</scope>
    <source>
        <strain>Sprague-Dawley</strain>
        <tissue>Liver</tissue>
    </source>
</reference>
<feature type="chain" id="PRO_0000208901" description="Sialidase-2">
    <location>
        <begin position="1"/>
        <end position="379"/>
    </location>
</feature>
<feature type="repeat" description="BNR 1">
    <location>
        <begin position="127"/>
        <end position="138"/>
    </location>
</feature>
<feature type="repeat" description="BNR 2">
    <location>
        <begin position="197"/>
        <end position="208"/>
    </location>
</feature>
<feature type="short sequence motif" description="FRIP motif">
    <location>
        <begin position="20"/>
        <end position="23"/>
    </location>
</feature>
<feature type="active site" description="Proton acceptor" evidence="1">
    <location>
        <position position="46"/>
    </location>
</feature>
<feature type="active site" description="Nucleophile" evidence="1">
    <location>
        <position position="333"/>
    </location>
</feature>
<feature type="active site" evidence="4">
    <location>
        <position position="354"/>
    </location>
</feature>
<feature type="binding site" evidence="1">
    <location>
        <position position="21"/>
    </location>
    <ligand>
        <name>substrate</name>
    </ligand>
</feature>
<feature type="binding site" evidence="1">
    <location>
        <position position="41"/>
    </location>
    <ligand>
        <name>substrate</name>
    </ligand>
</feature>
<feature type="binding site" evidence="1">
    <location>
        <position position="179"/>
    </location>
    <ligand>
        <name>substrate</name>
    </ligand>
</feature>
<feature type="binding site" evidence="1">
    <location>
        <position position="181"/>
    </location>
    <ligand>
        <name>substrate</name>
    </ligand>
</feature>
<feature type="binding site" evidence="1">
    <location>
        <position position="218"/>
    </location>
    <ligand>
        <name>substrate</name>
    </ligand>
</feature>
<feature type="binding site" evidence="4">
    <location>
        <position position="237"/>
    </location>
    <ligand>
        <name>substrate</name>
    </ligand>
</feature>
<feature type="binding site" evidence="1">
    <location>
        <position position="303"/>
    </location>
    <ligand>
        <name>substrate</name>
    </ligand>
</feature>
<dbReference type="EC" id="3.2.1.18" evidence="5"/>
<dbReference type="EMBL" id="D16300">
    <property type="protein sequence ID" value="BAA03805.1"/>
    <property type="molecule type" value="mRNA"/>
</dbReference>
<dbReference type="EMBL" id="D50606">
    <property type="protein sequence ID" value="BAA09169.1"/>
    <property type="molecule type" value="Genomic_DNA"/>
</dbReference>
<dbReference type="PIR" id="A49679">
    <property type="entry name" value="A49679"/>
</dbReference>
<dbReference type="SMR" id="Q64627"/>
<dbReference type="FunCoup" id="Q64627">
    <property type="interactions" value="20"/>
</dbReference>
<dbReference type="STRING" id="10116.ENSRNOP00000022818"/>
<dbReference type="CAZy" id="GH33">
    <property type="family name" value="Glycoside Hydrolase Family 33"/>
</dbReference>
<dbReference type="PhosphoSitePlus" id="Q64627"/>
<dbReference type="PaxDb" id="10116-ENSRNOP00000022818"/>
<dbReference type="UCSC" id="RGD:3164">
    <property type="organism name" value="rat"/>
</dbReference>
<dbReference type="AGR" id="RGD:3164"/>
<dbReference type="RGD" id="3164">
    <property type="gene designation" value="Neu2"/>
</dbReference>
<dbReference type="eggNOG" id="ENOG502QSFT">
    <property type="taxonomic scope" value="Eukaryota"/>
</dbReference>
<dbReference type="InParanoid" id="Q64627"/>
<dbReference type="PhylomeDB" id="Q64627"/>
<dbReference type="Reactome" id="R-RNO-4085001">
    <property type="pathway name" value="Sialic acid metabolism"/>
</dbReference>
<dbReference type="Reactome" id="R-RNO-9840310">
    <property type="pathway name" value="Glycosphingolipid catabolism"/>
</dbReference>
<dbReference type="PRO" id="PR:Q64627"/>
<dbReference type="Proteomes" id="UP000002494">
    <property type="component" value="Unplaced"/>
</dbReference>
<dbReference type="GO" id="GO:1902494">
    <property type="term" value="C:catalytic complex"/>
    <property type="evidence" value="ECO:0000266"/>
    <property type="project" value="RGD"/>
</dbReference>
<dbReference type="GO" id="GO:0005737">
    <property type="term" value="C:cytoplasm"/>
    <property type="evidence" value="ECO:0000318"/>
    <property type="project" value="GO_Central"/>
</dbReference>
<dbReference type="GO" id="GO:0005829">
    <property type="term" value="C:cytosol"/>
    <property type="evidence" value="ECO:0000266"/>
    <property type="project" value="RGD"/>
</dbReference>
<dbReference type="GO" id="GO:0005764">
    <property type="term" value="C:lysosome"/>
    <property type="evidence" value="ECO:0000318"/>
    <property type="project" value="GO_Central"/>
</dbReference>
<dbReference type="GO" id="GO:0016020">
    <property type="term" value="C:membrane"/>
    <property type="evidence" value="ECO:0000318"/>
    <property type="project" value="GO_Central"/>
</dbReference>
<dbReference type="GO" id="GO:0004308">
    <property type="term" value="F:exo-alpha-sialidase activity"/>
    <property type="evidence" value="ECO:0000314"/>
    <property type="project" value="RGD"/>
</dbReference>
<dbReference type="GO" id="GO:0006689">
    <property type="term" value="P:ganglioside catabolic process"/>
    <property type="evidence" value="ECO:0000250"/>
    <property type="project" value="UniProtKB"/>
</dbReference>
<dbReference type="GO" id="GO:0006516">
    <property type="term" value="P:glycoprotein catabolic process"/>
    <property type="evidence" value="ECO:0000266"/>
    <property type="project" value="RGD"/>
</dbReference>
<dbReference type="GO" id="GO:0009313">
    <property type="term" value="P:oligosaccharide catabolic process"/>
    <property type="evidence" value="ECO:0000250"/>
    <property type="project" value="UniProtKB"/>
</dbReference>
<dbReference type="GO" id="GO:0045663">
    <property type="term" value="P:positive regulation of myoblast differentiation"/>
    <property type="evidence" value="ECO:0000314"/>
    <property type="project" value="RGD"/>
</dbReference>
<dbReference type="GO" id="GO:0010831">
    <property type="term" value="P:positive regulation of myotube differentiation"/>
    <property type="evidence" value="ECO:0000315"/>
    <property type="project" value="RGD"/>
</dbReference>
<dbReference type="GO" id="GO:0045471">
    <property type="term" value="P:response to ethanol"/>
    <property type="evidence" value="ECO:0000270"/>
    <property type="project" value="RGD"/>
</dbReference>
<dbReference type="CDD" id="cd15482">
    <property type="entry name" value="Sialidase_non-viral"/>
    <property type="match status" value="1"/>
</dbReference>
<dbReference type="FunFam" id="2.120.10.10:FF:000002">
    <property type="entry name" value="Neuraminidase 3"/>
    <property type="match status" value="1"/>
</dbReference>
<dbReference type="Gene3D" id="2.120.10.10">
    <property type="match status" value="1"/>
</dbReference>
<dbReference type="InterPro" id="IPR011040">
    <property type="entry name" value="Sialidase"/>
</dbReference>
<dbReference type="InterPro" id="IPR026856">
    <property type="entry name" value="Sialidase_fam"/>
</dbReference>
<dbReference type="InterPro" id="IPR036278">
    <property type="entry name" value="Sialidase_sf"/>
</dbReference>
<dbReference type="PANTHER" id="PTHR10628">
    <property type="entry name" value="SIALIDASE"/>
    <property type="match status" value="1"/>
</dbReference>
<dbReference type="PANTHER" id="PTHR10628:SF6">
    <property type="entry name" value="SIALIDASE-2"/>
    <property type="match status" value="1"/>
</dbReference>
<dbReference type="Pfam" id="PF13088">
    <property type="entry name" value="BNR_2"/>
    <property type="match status" value="1"/>
</dbReference>
<dbReference type="SUPFAM" id="SSF50939">
    <property type="entry name" value="Sialidases"/>
    <property type="match status" value="1"/>
</dbReference>
<accession>Q64627</accession>
<accession>Q63705</accession>